<evidence type="ECO:0000250" key="1"/>
<evidence type="ECO:0000305" key="2"/>
<proteinExistence type="evidence at transcript level"/>
<organismHost>
    <name type="scientific">Vertebrata</name>
    <dbReference type="NCBI Taxonomy" id="7742"/>
</organismHost>
<feature type="chain" id="PRO_0000099154" description="DNA-directed RNA polymerase 18 kDa subunit">
    <location>
        <begin position="1"/>
        <end position="161"/>
    </location>
</feature>
<gene>
    <name type="primary">RPO18</name>
    <name type="ordered locus">FPV056</name>
    <name type="ORF">FP-D7</name>
    <name type="ORF">FPD7</name>
</gene>
<comment type="function">
    <text evidence="1">Part of the DNA-dependent RNA polymerase which catalyzes the transcription of viral DNA into RNA using the four ribonucleoside triphosphates as substrates. Responsible for the transcription of early, intermediate and late genes. DNA-dependent RNA polymerase associates with the early transcription factor (ETF) thereby allowing the early genes transcription. Late transcription, and probably also intermediate transcription, require newly synthesized RNA polymerase (By similarity).</text>
</comment>
<comment type="catalytic activity">
    <reaction>
        <text>RNA(n) + a ribonucleoside 5'-triphosphate = RNA(n+1) + diphosphate</text>
        <dbReference type="Rhea" id="RHEA:21248"/>
        <dbReference type="Rhea" id="RHEA-COMP:14527"/>
        <dbReference type="Rhea" id="RHEA-COMP:17342"/>
        <dbReference type="ChEBI" id="CHEBI:33019"/>
        <dbReference type="ChEBI" id="CHEBI:61557"/>
        <dbReference type="ChEBI" id="CHEBI:140395"/>
        <dbReference type="EC" id="2.7.7.6"/>
    </reaction>
</comment>
<comment type="subunit">
    <text evidence="1">The DNA-dependent RNA polymerase used for intermediate and late genes expression consists of eight subunits 147 kDa, 133 kDa, 35 kDa, 30 kDa, 22 kDa, 19 kDa, 18 kDa and 7 kDa totalling more than 500 kDa in mass. The same holoenzyme, with the addition of the transcription-specificity factor RAP94, is used for early gene expression (By similarity).</text>
</comment>
<comment type="subcellular location">
    <subcellularLocation>
        <location evidence="2">Virion</location>
    </subcellularLocation>
    <text evidence="1">All the enzymes and other proteins required to synthesize early mRNAs are packaged within the virion core along with the DNA genome. This is necessary because viral early mRNAs are synthesized within minutes after virus entry into the cell and are extruded through pores in the core particle (By similarity).</text>
</comment>
<comment type="induction">
    <text>Expressed in the early phase of the viral replicative cycle.</text>
</comment>
<comment type="similarity">
    <text evidence="2">Belongs to the poxviridae DNA-directed RNA polymerase 18 kDa subunit family.</text>
</comment>
<comment type="sequence caution" evidence="2">
    <conflict type="erroneous initiation">
        <sequence resource="EMBL-CDS" id="CAA06398"/>
    </conflict>
    <text>Truncated N-terminus.</text>
</comment>
<comment type="sequence caution" evidence="2">
    <conflict type="erroneous initiation">
        <sequence resource="EMBL-CDS" id="CAA06398"/>
    </conflict>
</comment>
<protein>
    <recommendedName>
        <fullName>DNA-directed RNA polymerase 18 kDa subunit</fullName>
        <ecNumber>2.7.7.6</ecNumber>
    </recommendedName>
</protein>
<dbReference type="EC" id="2.7.7.6"/>
<dbReference type="EMBL" id="X17202">
    <property type="protein sequence ID" value="CAA35070.1"/>
    <property type="molecule type" value="Genomic_DNA"/>
</dbReference>
<dbReference type="EMBL" id="AJ005163">
    <property type="protein sequence ID" value="CAA06398.1"/>
    <property type="status" value="ALT_INIT"/>
    <property type="molecule type" value="Genomic_DNA"/>
</dbReference>
<dbReference type="EMBL" id="AF198100">
    <property type="protein sequence ID" value="AAF44400.1"/>
    <property type="molecule type" value="Genomic_DNA"/>
</dbReference>
<dbReference type="PIR" id="G35216">
    <property type="entry name" value="G35216"/>
</dbReference>
<dbReference type="RefSeq" id="NP_039019.1">
    <property type="nucleotide sequence ID" value="NC_002188.1"/>
</dbReference>
<dbReference type="SMR" id="P21967"/>
<dbReference type="GeneID" id="1486604"/>
<dbReference type="KEGG" id="vg:1486604"/>
<dbReference type="Proteomes" id="UP000008597">
    <property type="component" value="Segment"/>
</dbReference>
<dbReference type="GO" id="GO:0000428">
    <property type="term" value="C:DNA-directed RNA polymerase complex"/>
    <property type="evidence" value="ECO:0007669"/>
    <property type="project" value="UniProtKB-KW"/>
</dbReference>
<dbReference type="GO" id="GO:0044423">
    <property type="term" value="C:virion component"/>
    <property type="evidence" value="ECO:0007669"/>
    <property type="project" value="UniProtKB-KW"/>
</dbReference>
<dbReference type="GO" id="GO:0003677">
    <property type="term" value="F:DNA binding"/>
    <property type="evidence" value="ECO:0007669"/>
    <property type="project" value="InterPro"/>
</dbReference>
<dbReference type="GO" id="GO:0003899">
    <property type="term" value="F:DNA-directed RNA polymerase activity"/>
    <property type="evidence" value="ECO:0007669"/>
    <property type="project" value="UniProtKB-EC"/>
</dbReference>
<dbReference type="GO" id="GO:0019083">
    <property type="term" value="P:viral transcription"/>
    <property type="evidence" value="ECO:0007669"/>
    <property type="project" value="InterPro"/>
</dbReference>
<dbReference type="InterPro" id="IPR004973">
    <property type="entry name" value="DNA-dir_RNA_pol_18kDa_poxviral"/>
</dbReference>
<dbReference type="Pfam" id="PF03293">
    <property type="entry name" value="Pox_RNA_pol"/>
    <property type="match status" value="1"/>
</dbReference>
<sequence>MSLFNTNAYLPVVIQPHELNLDLMDNIKKAVINKYLHKETSGFMAKKIQIVEDTPMPLAELVNNEIVVHVTCNIDYKYYKVGDIVSGILTITDESDISVVCSDLICKIRSDSGTVSYDNSKYCFIKNGKVYANESTVTVMLKEAQSGMESSFVFLGNIIEK</sequence>
<keyword id="KW-0240">DNA-directed RNA polymerase</keyword>
<keyword id="KW-0244">Early protein</keyword>
<keyword id="KW-0548">Nucleotidyltransferase</keyword>
<keyword id="KW-1185">Reference proteome</keyword>
<keyword id="KW-0804">Transcription</keyword>
<keyword id="KW-0808">Transferase</keyword>
<keyword id="KW-0946">Virion</keyword>
<reference key="1">
    <citation type="journal article" date="1990" name="J. Gen. Virol.">
        <title>Nucleotide sequence analysis of a 10.5 kbp HindIII fragment of fowlpox virus: relatedness to the central portion of the vaccinia virus HindIII D region.</title>
        <authorList>
            <person name="Tartaglia J."/>
            <person name="Winslow J."/>
            <person name="Goebel S.J."/>
            <person name="Johnson G.P."/>
            <person name="Taylor J."/>
            <person name="Paoletti E."/>
        </authorList>
    </citation>
    <scope>NUCLEOTIDE SEQUENCE [GENOMIC DNA]</scope>
    <source>
        <strain>FP-1</strain>
    </source>
</reference>
<reference key="2">
    <citation type="submission" date="1998-05" db="EMBL/GenBank/DDBJ databases">
        <authorList>
            <person name="Skinner M.A."/>
        </authorList>
    </citation>
    <scope>NUCLEOTIDE SEQUENCE [GENOMIC DNA]</scope>
    <source>
        <strain>FP-9 / Isolate HP-440</strain>
    </source>
</reference>
<reference key="3">
    <citation type="journal article" date="2000" name="J. Virol.">
        <title>The genome of fowlpox virus.</title>
        <authorList>
            <person name="Afonso C.L."/>
            <person name="Tulman E.R."/>
            <person name="Lu Z."/>
            <person name="Zsak L."/>
            <person name="Kutish G.F."/>
            <person name="Rock D.L."/>
        </authorList>
    </citation>
    <scope>NUCLEOTIDE SEQUENCE [LARGE SCALE GENOMIC DNA]</scope>
</reference>
<name>RP18_FOWPN</name>
<accession>P21967</accession>
<accession>O93018</accession>
<organism>
    <name type="scientific">Fowlpox virus (strain NVSL)</name>
    <name type="common">FPV</name>
    <dbReference type="NCBI Taxonomy" id="928301"/>
    <lineage>
        <taxon>Viruses</taxon>
        <taxon>Varidnaviria</taxon>
        <taxon>Bamfordvirae</taxon>
        <taxon>Nucleocytoviricota</taxon>
        <taxon>Pokkesviricetes</taxon>
        <taxon>Chitovirales</taxon>
        <taxon>Poxviridae</taxon>
        <taxon>Chordopoxvirinae</taxon>
        <taxon>Avipoxvirus</taxon>
        <taxon>Fowlpox virus</taxon>
    </lineage>
</organism>